<name>RL35_GLUOX</name>
<proteinExistence type="inferred from homology"/>
<reference key="1">
    <citation type="journal article" date="2005" name="Nat. Biotechnol.">
        <title>Complete genome sequence of the acetic acid bacterium Gluconobacter oxydans.</title>
        <authorList>
            <person name="Prust C."/>
            <person name="Hoffmeister M."/>
            <person name="Liesegang H."/>
            <person name="Wiezer A."/>
            <person name="Fricke W.F."/>
            <person name="Ehrenreich A."/>
            <person name="Gottschalk G."/>
            <person name="Deppenmeier U."/>
        </authorList>
    </citation>
    <scope>NUCLEOTIDE SEQUENCE [LARGE SCALE GENOMIC DNA]</scope>
    <source>
        <strain>621H</strain>
    </source>
</reference>
<dbReference type="EMBL" id="CP000009">
    <property type="protein sequence ID" value="AAW60047.1"/>
    <property type="molecule type" value="Genomic_DNA"/>
</dbReference>
<dbReference type="RefSeq" id="WP_011251850.1">
    <property type="nucleotide sequence ID" value="NZ_LT900338.1"/>
</dbReference>
<dbReference type="SMR" id="Q5FU99"/>
<dbReference type="STRING" id="290633.GOX0264"/>
<dbReference type="GeneID" id="56904531"/>
<dbReference type="KEGG" id="gox:GOX0264"/>
<dbReference type="eggNOG" id="COG0291">
    <property type="taxonomic scope" value="Bacteria"/>
</dbReference>
<dbReference type="HOGENOM" id="CLU_169643_2_1_5"/>
<dbReference type="Proteomes" id="UP000006375">
    <property type="component" value="Chromosome"/>
</dbReference>
<dbReference type="GO" id="GO:1990904">
    <property type="term" value="C:ribonucleoprotein complex"/>
    <property type="evidence" value="ECO:0007669"/>
    <property type="project" value="UniProtKB-KW"/>
</dbReference>
<dbReference type="GO" id="GO:0005840">
    <property type="term" value="C:ribosome"/>
    <property type="evidence" value="ECO:0007669"/>
    <property type="project" value="UniProtKB-KW"/>
</dbReference>
<dbReference type="GO" id="GO:0003735">
    <property type="term" value="F:structural constituent of ribosome"/>
    <property type="evidence" value="ECO:0007669"/>
    <property type="project" value="InterPro"/>
</dbReference>
<dbReference type="GO" id="GO:0006412">
    <property type="term" value="P:translation"/>
    <property type="evidence" value="ECO:0007669"/>
    <property type="project" value="UniProtKB-UniRule"/>
</dbReference>
<dbReference type="FunFam" id="4.10.410.60:FF:000001">
    <property type="entry name" value="50S ribosomal protein L35"/>
    <property type="match status" value="1"/>
</dbReference>
<dbReference type="Gene3D" id="4.10.410.60">
    <property type="match status" value="1"/>
</dbReference>
<dbReference type="HAMAP" id="MF_00514">
    <property type="entry name" value="Ribosomal_bL35"/>
    <property type="match status" value="1"/>
</dbReference>
<dbReference type="InterPro" id="IPR001706">
    <property type="entry name" value="Ribosomal_bL35"/>
</dbReference>
<dbReference type="InterPro" id="IPR021137">
    <property type="entry name" value="Ribosomal_bL35-like"/>
</dbReference>
<dbReference type="InterPro" id="IPR018265">
    <property type="entry name" value="Ribosomal_bL35_CS"/>
</dbReference>
<dbReference type="InterPro" id="IPR037229">
    <property type="entry name" value="Ribosomal_bL35_sf"/>
</dbReference>
<dbReference type="NCBIfam" id="TIGR00001">
    <property type="entry name" value="rpmI_bact"/>
    <property type="match status" value="1"/>
</dbReference>
<dbReference type="Pfam" id="PF01632">
    <property type="entry name" value="Ribosomal_L35p"/>
    <property type="match status" value="1"/>
</dbReference>
<dbReference type="PRINTS" id="PR00064">
    <property type="entry name" value="RIBOSOMALL35"/>
</dbReference>
<dbReference type="SUPFAM" id="SSF143034">
    <property type="entry name" value="L35p-like"/>
    <property type="match status" value="1"/>
</dbReference>
<dbReference type="PROSITE" id="PS00936">
    <property type="entry name" value="RIBOSOMAL_L35"/>
    <property type="match status" value="1"/>
</dbReference>
<organism>
    <name type="scientific">Gluconobacter oxydans (strain 621H)</name>
    <name type="common">Gluconobacter suboxydans</name>
    <dbReference type="NCBI Taxonomy" id="290633"/>
    <lineage>
        <taxon>Bacteria</taxon>
        <taxon>Pseudomonadati</taxon>
        <taxon>Pseudomonadota</taxon>
        <taxon>Alphaproteobacteria</taxon>
        <taxon>Acetobacterales</taxon>
        <taxon>Acetobacteraceae</taxon>
        <taxon>Gluconobacter</taxon>
    </lineage>
</organism>
<evidence type="ECO:0000255" key="1">
    <source>
        <dbReference type="HAMAP-Rule" id="MF_00514"/>
    </source>
</evidence>
<evidence type="ECO:0000256" key="2">
    <source>
        <dbReference type="SAM" id="MobiDB-lite"/>
    </source>
</evidence>
<evidence type="ECO:0000305" key="3"/>
<comment type="similarity">
    <text evidence="1">Belongs to the bacterial ribosomal protein bL35 family.</text>
</comment>
<accession>Q5FU99</accession>
<gene>
    <name evidence="1" type="primary">rpmI</name>
    <name type="ordered locus">GOX0264</name>
</gene>
<keyword id="KW-1185">Reference proteome</keyword>
<keyword id="KW-0687">Ribonucleoprotein</keyword>
<keyword id="KW-0689">Ribosomal protein</keyword>
<feature type="chain" id="PRO_0000258685" description="Large ribosomal subunit protein bL35">
    <location>
        <begin position="1"/>
        <end position="67"/>
    </location>
</feature>
<feature type="region of interest" description="Disordered" evidence="2">
    <location>
        <begin position="21"/>
        <end position="50"/>
    </location>
</feature>
<feature type="compositionally biased region" description="Basic residues" evidence="2">
    <location>
        <begin position="28"/>
        <end position="44"/>
    </location>
</feature>
<protein>
    <recommendedName>
        <fullName evidence="1">Large ribosomal subunit protein bL35</fullName>
    </recommendedName>
    <alternativeName>
        <fullName evidence="3">50S ribosomal protein L35</fullName>
    </alternativeName>
</protein>
<sequence>MPKMKTKSSVKKRFKITATGKVMCGPGNKRHGLINRPQKMKRTNRGPQTMTDMDAKTIKQWAPYGLS</sequence>